<sequence>MSQTCQTGYAYMQPFVQIIPSNLSLACGLRILRAEDYQSSLTTEELISAAKQDAEKILADAQEVYEQQKQLGWQAGMDEARTLQATLIHETQLQCQQFYRHVEQQMSEVVLLAVRKILNDYDQVAMTLQVVREALALVSNQKQVVVRVNPDQAGAIREQIAKVHKDFPEISYLEVTADARLDQGGCILETEVGIIDASIDGQIEALSRAISTTLGQMKVTE</sequence>
<name>SCTL_YERPE</name>
<organism>
    <name type="scientific">Yersinia pestis</name>
    <dbReference type="NCBI Taxonomy" id="632"/>
    <lineage>
        <taxon>Bacteria</taxon>
        <taxon>Pseudomonadati</taxon>
        <taxon>Pseudomonadota</taxon>
        <taxon>Gammaproteobacteria</taxon>
        <taxon>Enterobacterales</taxon>
        <taxon>Yersiniaceae</taxon>
        <taxon>Yersinia</taxon>
    </lineage>
</organism>
<reference key="1">
    <citation type="journal article" date="1998" name="Infect. Immun.">
        <title>DNA sequencing and analysis of the low-Ca2+-response plasmid pCD1 of Yersinia pestis KIM5.</title>
        <authorList>
            <person name="Perry R.D."/>
            <person name="Straley S.C."/>
            <person name="Fetherston J.D."/>
            <person name="Rose D.J."/>
            <person name="Gregor J."/>
            <person name="Blattner F.R."/>
        </authorList>
    </citation>
    <scope>NUCLEOTIDE SEQUENCE [GENOMIC DNA]</scope>
    <source>
        <strain>KIM5 / Biovar Mediaevalis</strain>
    </source>
</reference>
<reference key="2">
    <citation type="journal article" date="1998" name="J. Bacteriol.">
        <title>Structural organization of virulence-associated plasmids of Yersinia pestis.</title>
        <authorList>
            <person name="Hu P."/>
            <person name="Elliott J."/>
            <person name="McCready P."/>
            <person name="Skowronski E."/>
            <person name="Garnes J."/>
            <person name="Kobayashi A."/>
            <person name="Brubaker R.R."/>
            <person name="Garcia E."/>
        </authorList>
    </citation>
    <scope>NUCLEOTIDE SEQUENCE [GENOMIC DNA]</scope>
    <source>
        <strain>KIM5 / Biovar Mediaevalis</strain>
    </source>
</reference>
<reference key="3">
    <citation type="journal article" date="2001" name="Nature">
        <title>Genome sequence of Yersinia pestis, the causative agent of plague.</title>
        <authorList>
            <person name="Parkhill J."/>
            <person name="Wren B.W."/>
            <person name="Thomson N.R."/>
            <person name="Titball R.W."/>
            <person name="Holden M.T.G."/>
            <person name="Prentice M.B."/>
            <person name="Sebaihia M."/>
            <person name="James K.D."/>
            <person name="Churcher C.M."/>
            <person name="Mungall K.L."/>
            <person name="Baker S."/>
            <person name="Basham D."/>
            <person name="Bentley S.D."/>
            <person name="Brooks K."/>
            <person name="Cerdeno-Tarraga A.-M."/>
            <person name="Chillingworth T."/>
            <person name="Cronin A."/>
            <person name="Davies R.M."/>
            <person name="Davis P."/>
            <person name="Dougan G."/>
            <person name="Feltwell T."/>
            <person name="Hamlin N."/>
            <person name="Holroyd S."/>
            <person name="Jagels K."/>
            <person name="Karlyshev A.V."/>
            <person name="Leather S."/>
            <person name="Moule S."/>
            <person name="Oyston P.C.F."/>
            <person name="Quail M.A."/>
            <person name="Rutherford K.M."/>
            <person name="Simmonds M."/>
            <person name="Skelton J."/>
            <person name="Stevens K."/>
            <person name="Whitehead S."/>
            <person name="Barrell B.G."/>
        </authorList>
    </citation>
    <scope>NUCLEOTIDE SEQUENCE [LARGE SCALE GENOMIC DNA]</scope>
    <source>
        <strain>CO-92 / Biovar Orientalis</strain>
    </source>
</reference>
<reference key="4">
    <citation type="journal article" date="2004" name="DNA Res.">
        <title>Complete genome sequence of Yersinia pestis strain 91001, an isolate avirulent to humans.</title>
        <authorList>
            <person name="Song Y."/>
            <person name="Tong Z."/>
            <person name="Wang J."/>
            <person name="Wang L."/>
            <person name="Guo Z."/>
            <person name="Han Y."/>
            <person name="Zhang J."/>
            <person name="Pei D."/>
            <person name="Zhou D."/>
            <person name="Qin H."/>
            <person name="Pang X."/>
            <person name="Han Y."/>
            <person name="Zhai J."/>
            <person name="Li M."/>
            <person name="Cui B."/>
            <person name="Qi Z."/>
            <person name="Jin L."/>
            <person name="Dai R."/>
            <person name="Chen F."/>
            <person name="Li S."/>
            <person name="Ye C."/>
            <person name="Du Z."/>
            <person name="Lin W."/>
            <person name="Wang J."/>
            <person name="Yu J."/>
            <person name="Yang H."/>
            <person name="Wang J."/>
            <person name="Huang P."/>
            <person name="Yang R."/>
        </authorList>
    </citation>
    <scope>NUCLEOTIDE SEQUENCE [LARGE SCALE GENOMIC DNA]</scope>
    <source>
        <strain>91001 / Biovar Mediaevalis</strain>
    </source>
</reference>
<reference key="5">
    <citation type="journal article" date="2000" name="FEMS Microbiol. Lett.">
        <title>Interactions between type III secretion apparatus components from Yersinia pestis detected using the yeast two-hybrid system.</title>
        <authorList>
            <person name="Jackson M.W."/>
            <person name="Plano G.V."/>
        </authorList>
    </citation>
    <scope>FUNCTION</scope>
    <scope>SUBUNIT</scope>
    <scope>INTERACTION WITH YSCN/SCTN AND YSCQ/SCTQ</scope>
    <source>
        <strain>KIM5 / Biovar Mediaevalis</strain>
    </source>
</reference>
<comment type="function">
    <text evidence="1 4">Component of the type III secretion system (T3SS), also called injectisome, which is used to inject bacterial effector proteins into eukaryotic host cells (Probable). Acts as a regulator of the YscN/SctN ATPase activity (By similarity).</text>
</comment>
<comment type="subunit">
    <text evidence="1 2 4">The core secretion machinery of the T3SS is composed of approximately 20 different proteins, including cytoplasmic components, a base, an export apparatus and a needle (By similarity). This subunit is part of the cytosolic complex (Probable). Interacts directly with YscN/SctN (T3SS ATPase) and YscQ/SctQ (the major sorting platform component) (PubMed:10779717).</text>
</comment>
<comment type="interaction">
    <interactant intactId="EBI-2846298">
        <id>P69976</id>
    </interactant>
    <interactant intactId="EBI-73886">
        <id>Q04206</id>
        <label>RELA</label>
    </interactant>
    <organismsDiffer>true</organismsDiffer>
    <experiments>2</experiments>
</comment>
<comment type="subcellular location">
    <subcellularLocation>
        <location evidence="1">Cytoplasm</location>
    </subcellularLocation>
</comment>
<comment type="similarity">
    <text evidence="3">Belongs to the SctL stator family.</text>
</comment>
<comment type="caution">
    <text evidence="3">It is uncertain whether Met-1 or Met-12 is the initiator.</text>
</comment>
<evidence type="ECO:0000250" key="1">
    <source>
        <dbReference type="UniProtKB" id="Q01253"/>
    </source>
</evidence>
<evidence type="ECO:0000269" key="2">
    <source>
    </source>
</evidence>
<evidence type="ECO:0000305" key="3"/>
<evidence type="ECO:0000305" key="4">
    <source>
    </source>
</evidence>
<dbReference type="EMBL" id="AF074612">
    <property type="protein sequence ID" value="AAC69773.1"/>
    <property type="molecule type" value="Genomic_DNA"/>
</dbReference>
<dbReference type="EMBL" id="AF053946">
    <property type="protein sequence ID" value="AAC62596.1"/>
    <property type="molecule type" value="Genomic_DNA"/>
</dbReference>
<dbReference type="EMBL" id="AL117189">
    <property type="protein sequence ID" value="CAB54938.1"/>
    <property type="molecule type" value="Genomic_DNA"/>
</dbReference>
<dbReference type="EMBL" id="AE017043">
    <property type="protein sequence ID" value="AAS58541.1"/>
    <property type="molecule type" value="Genomic_DNA"/>
</dbReference>
<dbReference type="PIR" id="T43564">
    <property type="entry name" value="T43564"/>
</dbReference>
<dbReference type="RefSeq" id="NP_395195.1">
    <property type="nucleotide sequence ID" value="NC_003131.1"/>
</dbReference>
<dbReference type="RefSeq" id="NP_857721.1">
    <property type="nucleotide sequence ID" value="NC_004836.1"/>
</dbReference>
<dbReference type="RefSeq" id="NP_857916.1">
    <property type="nucleotide sequence ID" value="NC_004839.1"/>
</dbReference>
<dbReference type="RefSeq" id="WP_010981371.1">
    <property type="nucleotide sequence ID" value="NZ_WUCM01000070.1"/>
</dbReference>
<dbReference type="SMR" id="P69976"/>
<dbReference type="IntAct" id="P69976">
    <property type="interactions" value="15"/>
</dbReference>
<dbReference type="MINT" id="P69976"/>
<dbReference type="PaxDb" id="214092-5832481"/>
<dbReference type="DNASU" id="1149280"/>
<dbReference type="EnsemblBacteria" id="AAS58541">
    <property type="protein sequence ID" value="AAS58541"/>
    <property type="gene ID" value="YP_pCD22"/>
</dbReference>
<dbReference type="KEGG" id="ype:YPCD1.61"/>
<dbReference type="KEGG" id="ypm:YP_pCD22"/>
<dbReference type="PATRIC" id="fig|1028802.3.peg.342"/>
<dbReference type="eggNOG" id="COG1317">
    <property type="taxonomic scope" value="Bacteria"/>
</dbReference>
<dbReference type="HOGENOM" id="CLU_062625_2_1_6"/>
<dbReference type="OMA" id="KNGGCIL"/>
<dbReference type="OrthoDB" id="8221108at2"/>
<dbReference type="Proteomes" id="UP000000815">
    <property type="component" value="Plasmid pCD1"/>
</dbReference>
<dbReference type="Proteomes" id="UP000001019">
    <property type="component" value="Plasmid pCD1"/>
</dbReference>
<dbReference type="GO" id="GO:0005829">
    <property type="term" value="C:cytosol"/>
    <property type="evidence" value="ECO:0000318"/>
    <property type="project" value="GO_Central"/>
</dbReference>
<dbReference type="GO" id="GO:0030254">
    <property type="term" value="P:protein secretion by the type III secretion system"/>
    <property type="evidence" value="ECO:0007669"/>
    <property type="project" value="InterPro"/>
</dbReference>
<dbReference type="Gene3D" id="1.20.5.2950">
    <property type="match status" value="1"/>
</dbReference>
<dbReference type="InterPro" id="IPR018035">
    <property type="entry name" value="Flagellar_FliH/T3SS_HrpE"/>
</dbReference>
<dbReference type="InterPro" id="IPR012842">
    <property type="entry name" value="T3SS_SctL/SctL2"/>
</dbReference>
<dbReference type="InterPro" id="IPR051472">
    <property type="entry name" value="T3SS_Stator/FliH"/>
</dbReference>
<dbReference type="NCBIfam" id="TIGR02499">
    <property type="entry name" value="HrpE_YscL_not"/>
    <property type="match status" value="1"/>
</dbReference>
<dbReference type="NCBIfam" id="NF005392">
    <property type="entry name" value="PRK06937.1"/>
    <property type="match status" value="1"/>
</dbReference>
<dbReference type="PANTHER" id="PTHR34982:SF4">
    <property type="entry name" value="TYPE 3 SECRETION SYSTEM STATOR PROTEIN"/>
    <property type="match status" value="1"/>
</dbReference>
<dbReference type="PANTHER" id="PTHR34982">
    <property type="entry name" value="YOP PROTEINS TRANSLOCATION PROTEIN L"/>
    <property type="match status" value="1"/>
</dbReference>
<dbReference type="Pfam" id="PF02108">
    <property type="entry name" value="FliH"/>
    <property type="match status" value="1"/>
</dbReference>
<dbReference type="SUPFAM" id="SSF160527">
    <property type="entry name" value="V-type ATPase subunit E-like"/>
    <property type="match status" value="1"/>
</dbReference>
<gene>
    <name evidence="1" type="primary">sctL</name>
    <name type="synonym">lcrKC</name>
    <name type="synonym">yscL</name>
    <name type="ordered locus">YPCD1.61</name>
    <name type="ordered locus">y5017</name>
    <name type="ordered locus">y0020</name>
    <name type="ordered locus">YP_pCD22</name>
</gene>
<keyword id="KW-0963">Cytoplasm</keyword>
<keyword id="KW-0614">Plasmid</keyword>
<keyword id="KW-0653">Protein transport</keyword>
<keyword id="KW-1185">Reference proteome</keyword>
<keyword id="KW-0813">Transport</keyword>
<keyword id="KW-0843">Virulence</keyword>
<geneLocation type="plasmid">
    <name>pCD1</name>
</geneLocation>
<accession>P69976</accession>
<accession>Q00928</accession>
<accession>Q663H8</accession>
<feature type="chain" id="PRO_0000066493" description="Type 3 secretion system stator protein">
    <location>
        <begin position="1"/>
        <end position="221"/>
    </location>
</feature>
<proteinExistence type="evidence at protein level"/>
<protein>
    <recommendedName>
        <fullName evidence="3">Type 3 secretion system stator protein</fullName>
        <shortName evidence="3">T3SS stator protein</shortName>
    </recommendedName>
    <alternativeName>
        <fullName>Low calcium response locus protein KC</fullName>
    </alternativeName>
    <alternativeName>
        <fullName>Yop proteins translocation protein L</fullName>
    </alternativeName>
</protein>